<accession>Q96YL5</accession>
<proteinExistence type="inferred from homology"/>
<feature type="chain" id="PRO_0000152236" description="NH(3)-dependent NAD(+) synthetase">
    <location>
        <begin position="1"/>
        <end position="279"/>
    </location>
</feature>
<feature type="binding site" evidence="1">
    <location>
        <begin position="40"/>
        <end position="47"/>
    </location>
    <ligand>
        <name>ATP</name>
        <dbReference type="ChEBI" id="CHEBI:30616"/>
    </ligand>
</feature>
<feature type="binding site" evidence="1">
    <location>
        <position position="46"/>
    </location>
    <ligand>
        <name>Mg(2+)</name>
        <dbReference type="ChEBI" id="CHEBI:18420"/>
    </ligand>
</feature>
<feature type="binding site" evidence="1">
    <location>
        <position position="122"/>
    </location>
    <ligand>
        <name>deamido-NAD(+)</name>
        <dbReference type="ChEBI" id="CHEBI:58437"/>
    </ligand>
</feature>
<feature type="binding site" evidence="1">
    <location>
        <position position="142"/>
    </location>
    <ligand>
        <name>ATP</name>
        <dbReference type="ChEBI" id="CHEBI:30616"/>
    </ligand>
</feature>
<feature type="binding site" evidence="1">
    <location>
        <position position="147"/>
    </location>
    <ligand>
        <name>Mg(2+)</name>
        <dbReference type="ChEBI" id="CHEBI:18420"/>
    </ligand>
</feature>
<feature type="binding site" evidence="1">
    <location>
        <position position="155"/>
    </location>
    <ligand>
        <name>deamido-NAD(+)</name>
        <dbReference type="ChEBI" id="CHEBI:58437"/>
    </ligand>
</feature>
<feature type="binding site" evidence="1">
    <location>
        <position position="162"/>
    </location>
    <ligand>
        <name>deamido-NAD(+)</name>
        <dbReference type="ChEBI" id="CHEBI:58437"/>
    </ligand>
</feature>
<feature type="binding site" evidence="1">
    <location>
        <position position="171"/>
    </location>
    <ligand>
        <name>ATP</name>
        <dbReference type="ChEBI" id="CHEBI:30616"/>
    </ligand>
</feature>
<feature type="binding site" evidence="1">
    <location>
        <position position="193"/>
    </location>
    <ligand>
        <name>ATP</name>
        <dbReference type="ChEBI" id="CHEBI:30616"/>
    </ligand>
</feature>
<feature type="binding site" evidence="1">
    <location>
        <begin position="253"/>
        <end position="254"/>
    </location>
    <ligand>
        <name>deamido-NAD(+)</name>
        <dbReference type="ChEBI" id="CHEBI:58437"/>
    </ligand>
</feature>
<comment type="function">
    <text evidence="1">Catalyzes the ATP-dependent amidation of deamido-NAD to form NAD. Uses ammonia as a nitrogen source.</text>
</comment>
<comment type="catalytic activity">
    <reaction evidence="1">
        <text>deamido-NAD(+) + NH4(+) + ATP = AMP + diphosphate + NAD(+) + H(+)</text>
        <dbReference type="Rhea" id="RHEA:21188"/>
        <dbReference type="ChEBI" id="CHEBI:15378"/>
        <dbReference type="ChEBI" id="CHEBI:28938"/>
        <dbReference type="ChEBI" id="CHEBI:30616"/>
        <dbReference type="ChEBI" id="CHEBI:33019"/>
        <dbReference type="ChEBI" id="CHEBI:57540"/>
        <dbReference type="ChEBI" id="CHEBI:58437"/>
        <dbReference type="ChEBI" id="CHEBI:456215"/>
        <dbReference type="EC" id="6.3.1.5"/>
    </reaction>
</comment>
<comment type="pathway">
    <text evidence="1">Cofactor biosynthesis; NAD(+) biosynthesis; NAD(+) from deamido-NAD(+) (ammonia route): step 1/1.</text>
</comment>
<comment type="subunit">
    <text evidence="1">Homodimer.</text>
</comment>
<comment type="similarity">
    <text evidence="1">Belongs to the NAD synthetase family.</text>
</comment>
<gene>
    <name evidence="1" type="primary">nadE</name>
    <name type="ordered locus">STK_21590</name>
</gene>
<protein>
    <recommendedName>
        <fullName evidence="1">NH(3)-dependent NAD(+) synthetase</fullName>
        <ecNumber evidence="1">6.3.1.5</ecNumber>
    </recommendedName>
</protein>
<name>NADE_SULTO</name>
<organism>
    <name type="scientific">Sulfurisphaera tokodaii (strain DSM 16993 / JCM 10545 / NBRC 100140 / 7)</name>
    <name type="common">Sulfolobus tokodaii</name>
    <dbReference type="NCBI Taxonomy" id="273063"/>
    <lineage>
        <taxon>Archaea</taxon>
        <taxon>Thermoproteota</taxon>
        <taxon>Thermoprotei</taxon>
        <taxon>Sulfolobales</taxon>
        <taxon>Sulfolobaceae</taxon>
        <taxon>Sulfurisphaera</taxon>
    </lineage>
</organism>
<sequence length="279" mass="31822">MMPEYVRKKLTLDFGQVTDYIVRRIREYIEESKKEGGIIGLSGGIDSSVTTILLSRATNNFYILLMPTSSTPQKDIEDAMKIIKIVNGENKYSYINIDEIINEFSSIVNISDKIVIGNIKARVRMTLLYAFAQKMNYLVIGTGDKSEIMLGYFTKYGDGGVDVLPIGDLYKTQVRMLGNYLGVPEEIVKKPPSPALWEGQTAEGEIGLDYETIDSILYLKFEEMREPEEIAEMTKTSYDKVIKIINMVKTSQHKRLPPEIFRLSGRAINSDWRYPRQWG</sequence>
<evidence type="ECO:0000255" key="1">
    <source>
        <dbReference type="HAMAP-Rule" id="MF_00193"/>
    </source>
</evidence>
<dbReference type="EC" id="6.3.1.5" evidence="1"/>
<dbReference type="EMBL" id="BA000023">
    <property type="protein sequence ID" value="BAB67262.1"/>
    <property type="molecule type" value="Genomic_DNA"/>
</dbReference>
<dbReference type="SMR" id="Q96YL5"/>
<dbReference type="STRING" id="273063.STK_21590"/>
<dbReference type="KEGG" id="sto:STK_21590"/>
<dbReference type="PATRIC" id="fig|273063.9.peg.2448"/>
<dbReference type="eggNOG" id="arCOG00069">
    <property type="taxonomic scope" value="Archaea"/>
</dbReference>
<dbReference type="UniPathway" id="UPA00253">
    <property type="reaction ID" value="UER00333"/>
</dbReference>
<dbReference type="Proteomes" id="UP000001015">
    <property type="component" value="Chromosome"/>
</dbReference>
<dbReference type="GO" id="GO:0005737">
    <property type="term" value="C:cytoplasm"/>
    <property type="evidence" value="ECO:0007669"/>
    <property type="project" value="InterPro"/>
</dbReference>
<dbReference type="GO" id="GO:0005524">
    <property type="term" value="F:ATP binding"/>
    <property type="evidence" value="ECO:0007669"/>
    <property type="project" value="UniProtKB-UniRule"/>
</dbReference>
<dbReference type="GO" id="GO:0004359">
    <property type="term" value="F:glutaminase activity"/>
    <property type="evidence" value="ECO:0007669"/>
    <property type="project" value="InterPro"/>
</dbReference>
<dbReference type="GO" id="GO:0046872">
    <property type="term" value="F:metal ion binding"/>
    <property type="evidence" value="ECO:0007669"/>
    <property type="project" value="UniProtKB-KW"/>
</dbReference>
<dbReference type="GO" id="GO:0003952">
    <property type="term" value="F:NAD+ synthase (glutamine-hydrolyzing) activity"/>
    <property type="evidence" value="ECO:0007669"/>
    <property type="project" value="InterPro"/>
</dbReference>
<dbReference type="GO" id="GO:0008795">
    <property type="term" value="F:NAD+ synthase activity"/>
    <property type="evidence" value="ECO:0007669"/>
    <property type="project" value="UniProtKB-UniRule"/>
</dbReference>
<dbReference type="GO" id="GO:0009435">
    <property type="term" value="P:NAD biosynthetic process"/>
    <property type="evidence" value="ECO:0007669"/>
    <property type="project" value="UniProtKB-UniRule"/>
</dbReference>
<dbReference type="CDD" id="cd00553">
    <property type="entry name" value="NAD_synthase"/>
    <property type="match status" value="1"/>
</dbReference>
<dbReference type="FunFam" id="3.40.50.620:FF:000106">
    <property type="entry name" value="Glutamine-dependent NAD(+) synthetase"/>
    <property type="match status" value="1"/>
</dbReference>
<dbReference type="Gene3D" id="3.40.50.620">
    <property type="entry name" value="HUPs"/>
    <property type="match status" value="1"/>
</dbReference>
<dbReference type="HAMAP" id="MF_00193">
    <property type="entry name" value="NadE_ammonia_dep"/>
    <property type="match status" value="1"/>
</dbReference>
<dbReference type="InterPro" id="IPR022310">
    <property type="entry name" value="NAD/GMP_synthase"/>
</dbReference>
<dbReference type="InterPro" id="IPR003694">
    <property type="entry name" value="NAD_synthase"/>
</dbReference>
<dbReference type="InterPro" id="IPR022926">
    <property type="entry name" value="NH(3)-dep_NAD(+)_synth"/>
</dbReference>
<dbReference type="InterPro" id="IPR014729">
    <property type="entry name" value="Rossmann-like_a/b/a_fold"/>
</dbReference>
<dbReference type="NCBIfam" id="TIGR00552">
    <property type="entry name" value="nadE"/>
    <property type="match status" value="1"/>
</dbReference>
<dbReference type="NCBIfam" id="NF010587">
    <property type="entry name" value="PRK13980.1"/>
    <property type="match status" value="1"/>
</dbReference>
<dbReference type="PANTHER" id="PTHR23090:SF9">
    <property type="entry name" value="GLUTAMINE-DEPENDENT NAD(+) SYNTHETASE"/>
    <property type="match status" value="1"/>
</dbReference>
<dbReference type="PANTHER" id="PTHR23090">
    <property type="entry name" value="NH 3 /GLUTAMINE-DEPENDENT NAD + SYNTHETASE"/>
    <property type="match status" value="1"/>
</dbReference>
<dbReference type="Pfam" id="PF02540">
    <property type="entry name" value="NAD_synthase"/>
    <property type="match status" value="1"/>
</dbReference>
<dbReference type="SUPFAM" id="SSF52402">
    <property type="entry name" value="Adenine nucleotide alpha hydrolases-like"/>
    <property type="match status" value="1"/>
</dbReference>
<reference key="1">
    <citation type="journal article" date="2001" name="DNA Res.">
        <title>Complete genome sequence of an aerobic thermoacidophilic Crenarchaeon, Sulfolobus tokodaii strain7.</title>
        <authorList>
            <person name="Kawarabayasi Y."/>
            <person name="Hino Y."/>
            <person name="Horikawa H."/>
            <person name="Jin-no K."/>
            <person name="Takahashi M."/>
            <person name="Sekine M."/>
            <person name="Baba S."/>
            <person name="Ankai A."/>
            <person name="Kosugi H."/>
            <person name="Hosoyama A."/>
            <person name="Fukui S."/>
            <person name="Nagai Y."/>
            <person name="Nishijima K."/>
            <person name="Otsuka R."/>
            <person name="Nakazawa H."/>
            <person name="Takamiya M."/>
            <person name="Kato Y."/>
            <person name="Yoshizawa T."/>
            <person name="Tanaka T."/>
            <person name="Kudoh Y."/>
            <person name="Yamazaki J."/>
            <person name="Kushida N."/>
            <person name="Oguchi A."/>
            <person name="Aoki K."/>
            <person name="Masuda S."/>
            <person name="Yanagii M."/>
            <person name="Nishimura M."/>
            <person name="Yamagishi A."/>
            <person name="Oshima T."/>
            <person name="Kikuchi H."/>
        </authorList>
    </citation>
    <scope>NUCLEOTIDE SEQUENCE [LARGE SCALE GENOMIC DNA]</scope>
    <source>
        <strain>DSM 16993 / JCM 10545 / NBRC 100140 / 7</strain>
    </source>
</reference>
<keyword id="KW-0067">ATP-binding</keyword>
<keyword id="KW-0436">Ligase</keyword>
<keyword id="KW-0460">Magnesium</keyword>
<keyword id="KW-0479">Metal-binding</keyword>
<keyword id="KW-0520">NAD</keyword>
<keyword id="KW-0547">Nucleotide-binding</keyword>
<keyword id="KW-1185">Reference proteome</keyword>